<keyword id="KW-0539">Nucleus</keyword>
<evidence type="ECO:0000250" key="1">
    <source>
        <dbReference type="UniProtKB" id="Q96T88"/>
    </source>
</evidence>
<evidence type="ECO:0000255" key="2">
    <source>
        <dbReference type="PROSITE-ProRule" id="PRU00358"/>
    </source>
</evidence>
<evidence type="ECO:0000256" key="3">
    <source>
        <dbReference type="SAM" id="MobiDB-lite"/>
    </source>
</evidence>
<evidence type="ECO:0000269" key="4">
    <source>
    </source>
</evidence>
<evidence type="ECO:0000303" key="5">
    <source>
    </source>
</evidence>
<evidence type="ECO:0000305" key="6"/>
<evidence type="ECO:0000312" key="7">
    <source>
        <dbReference type="EMBL" id="AFR92806.2"/>
    </source>
</evidence>
<evidence type="ECO:0000312" key="8">
    <source>
        <dbReference type="Proteomes" id="UP000010091"/>
    </source>
</evidence>
<feature type="chain" id="PRO_0000454229" description="UHRF1-like protein">
    <location>
        <begin position="1"/>
        <end position="342"/>
    </location>
</feature>
<feature type="domain" description="YDG" evidence="2">
    <location>
        <begin position="168"/>
        <end position="322"/>
    </location>
</feature>
<feature type="region of interest" description="Disordered" evidence="3">
    <location>
        <begin position="41"/>
        <end position="149"/>
    </location>
</feature>
<feature type="region of interest" description="Disordered" evidence="3">
    <location>
        <begin position="236"/>
        <end position="257"/>
    </location>
</feature>
<feature type="compositionally biased region" description="Polar residues" evidence="3">
    <location>
        <begin position="42"/>
        <end position="59"/>
    </location>
</feature>
<feature type="compositionally biased region" description="Basic and acidic residues" evidence="3">
    <location>
        <begin position="74"/>
        <end position="90"/>
    </location>
</feature>
<feature type="compositionally biased region" description="Polar residues" evidence="3">
    <location>
        <begin position="115"/>
        <end position="141"/>
    </location>
</feature>
<feature type="compositionally biased region" description="Polar residues" evidence="3">
    <location>
        <begin position="238"/>
        <end position="257"/>
    </location>
</feature>
<feature type="binding site" evidence="1">
    <location>
        <position position="218"/>
    </location>
    <ligand>
        <name>DNA</name>
        <dbReference type="ChEBI" id="CHEBI:16991"/>
    </ligand>
    <ligandPart>
        <name>5-methylcytosine group</name>
        <dbReference type="ChEBI" id="CHEBI:65274"/>
    </ligandPart>
</feature>
<organism evidence="8">
    <name type="scientific">Cryptococcus neoformans var. grubii serotype A (strain H99 / ATCC 208821 / CBS 10515 / FGSC 9487)</name>
    <name type="common">Filobasidiella neoformans var. grubii</name>
    <dbReference type="NCBI Taxonomy" id="235443"/>
    <lineage>
        <taxon>Eukaryota</taxon>
        <taxon>Fungi</taxon>
        <taxon>Dikarya</taxon>
        <taxon>Basidiomycota</taxon>
        <taxon>Agaricomycotina</taxon>
        <taxon>Tremellomycetes</taxon>
        <taxon>Tremellales</taxon>
        <taxon>Cryptococcaceae</taxon>
        <taxon>Cryptococcus</taxon>
        <taxon>Cryptococcus neoformans species complex</taxon>
    </lineage>
</organism>
<comment type="function">
    <text evidence="4">Involved in the maintenance of DNA methylation (PubMed:31955845). Binds hemimethylated DNA (PubMed:31955845).</text>
</comment>
<comment type="subcellular location">
    <subcellularLocation>
        <location evidence="2">Nucleus</location>
    </subcellularLocation>
</comment>
<comment type="disruption phenotype">
    <text evidence="4">Mildly decreases methylation of the fifth carbon of cytosine (5mC) in DNA; simultaneous disruption of CLR4 exacerbates the effect.</text>
</comment>
<gene>
    <name evidence="5" type="primary">UHF1</name>
    <name evidence="5" type="synonym">UHRF1</name>
    <name evidence="7" type="ORF">CNAG_00677</name>
</gene>
<proteinExistence type="inferred from homology"/>
<dbReference type="EMBL" id="CP003820">
    <property type="protein sequence ID" value="AFR92806.2"/>
    <property type="molecule type" value="Genomic_DNA"/>
</dbReference>
<dbReference type="RefSeq" id="XP_012046390.1">
    <property type="nucleotide sequence ID" value="XM_012191000.1"/>
</dbReference>
<dbReference type="SMR" id="J9VHE9"/>
<dbReference type="GeneID" id="23884459"/>
<dbReference type="KEGG" id="cng:CNAG_00677"/>
<dbReference type="VEuPathDB" id="FungiDB:CNAG_00677"/>
<dbReference type="HOGENOM" id="CLU_033265_0_0_1"/>
<dbReference type="OrthoDB" id="4169at5206"/>
<dbReference type="Proteomes" id="UP000010091">
    <property type="component" value="Chromosome 1"/>
</dbReference>
<dbReference type="GO" id="GO:0005634">
    <property type="term" value="C:nucleus"/>
    <property type="evidence" value="ECO:0000305"/>
    <property type="project" value="UniProtKB"/>
</dbReference>
<dbReference type="GO" id="GO:0044729">
    <property type="term" value="F:hemi-methylated DNA-binding"/>
    <property type="evidence" value="ECO:0000314"/>
    <property type="project" value="UniProtKB"/>
</dbReference>
<dbReference type="GO" id="GO:0061630">
    <property type="term" value="F:ubiquitin protein ligase activity"/>
    <property type="evidence" value="ECO:0007669"/>
    <property type="project" value="TreeGrafter"/>
</dbReference>
<dbReference type="GO" id="GO:0044027">
    <property type="term" value="P:negative regulation of gene expression via chromosomal CpG island methylation"/>
    <property type="evidence" value="ECO:0007669"/>
    <property type="project" value="TreeGrafter"/>
</dbReference>
<dbReference type="GO" id="GO:0016567">
    <property type="term" value="P:protein ubiquitination"/>
    <property type="evidence" value="ECO:0007669"/>
    <property type="project" value="TreeGrafter"/>
</dbReference>
<dbReference type="FunFam" id="2.30.280.10:FF:000005">
    <property type="entry name" value="E3 ubiquitin-protein ligase UHRF1"/>
    <property type="match status" value="1"/>
</dbReference>
<dbReference type="Gene3D" id="2.30.280.10">
    <property type="entry name" value="SRA-YDG"/>
    <property type="match status" value="1"/>
</dbReference>
<dbReference type="InterPro" id="IPR015947">
    <property type="entry name" value="PUA-like_sf"/>
</dbReference>
<dbReference type="InterPro" id="IPR036987">
    <property type="entry name" value="SRA-YDG_sf"/>
</dbReference>
<dbReference type="InterPro" id="IPR003105">
    <property type="entry name" value="SRA_YDG"/>
</dbReference>
<dbReference type="InterPro" id="IPR045134">
    <property type="entry name" value="UHRF1/2-like"/>
</dbReference>
<dbReference type="PANTHER" id="PTHR14140">
    <property type="entry name" value="E3 UBIQUITIN-PROTEIN LIGASE UHRF-RELATED"/>
    <property type="match status" value="1"/>
</dbReference>
<dbReference type="PANTHER" id="PTHR14140:SF27">
    <property type="entry name" value="OS04G0289800 PROTEIN"/>
    <property type="match status" value="1"/>
</dbReference>
<dbReference type="Pfam" id="PF02182">
    <property type="entry name" value="SAD_SRA"/>
    <property type="match status" value="1"/>
</dbReference>
<dbReference type="SMART" id="SM00466">
    <property type="entry name" value="SRA"/>
    <property type="match status" value="1"/>
</dbReference>
<dbReference type="SUPFAM" id="SSF88697">
    <property type="entry name" value="PUA domain-like"/>
    <property type="match status" value="1"/>
</dbReference>
<dbReference type="PROSITE" id="PS51015">
    <property type="entry name" value="YDG"/>
    <property type="match status" value="1"/>
</dbReference>
<sequence length="342" mass="38167">MMRYEDVSQLSLMNLTYEEQRLENIRKNEDLLRSLGLGAPSEATTLATPSNLKTAGNQRRYNDTLVGKSNTGRNRSDSPRKRPTKDREDLNLVPQSAIKRRQSVRLGGKEKPNYTREQVTFNSDRDTPNTPSRQIKSTHSHPGSEEEDIRQVKTRTLGVRVHNPKTFGHIPGIGVGKWWATRMEASADAVHAPTVAGISGNAHEGAWSVALSGGYPDDIDLGYAFTYTGCGGRDLKGTKQNPKNLRTAPQTSHQSFDNPLNAALKRSAETRNPVRVIRGFKLQSKYAPPTGYRYDGLYIVEKAWMAKGLTNGLMVCRYAFKRMDDQGPLPQKDLDHDDDNKA</sequence>
<name>UHRF1_CRYNH</name>
<reference evidence="8" key="1">
    <citation type="journal article" date="2014" name="PLoS Genet.">
        <title>Analysis of the genome and transcriptome of Cryptococcus neoformans var. grubii reveals complex RNA expression and microevolution leading to virulence attenuation.</title>
        <authorList>
            <person name="Janbon G."/>
            <person name="Ormerod K.L."/>
            <person name="Paulet D."/>
            <person name="Byrnes E.J. III"/>
            <person name="Yadav V."/>
            <person name="Chatterjee G."/>
            <person name="Mullapudi N."/>
            <person name="Hon C.-C."/>
            <person name="Billmyre R.B."/>
            <person name="Brunel F."/>
            <person name="Bahn Y.-S."/>
            <person name="Chen W."/>
            <person name="Chen Y."/>
            <person name="Chow E.W.L."/>
            <person name="Coppee J.-Y."/>
            <person name="Floyd-Averette A."/>
            <person name="Gaillardin C."/>
            <person name="Gerik K.J."/>
            <person name="Goldberg J."/>
            <person name="Gonzalez-Hilarion S."/>
            <person name="Gujja S."/>
            <person name="Hamlin J.L."/>
            <person name="Hsueh Y.-P."/>
            <person name="Ianiri G."/>
            <person name="Jones S."/>
            <person name="Kodira C.D."/>
            <person name="Kozubowski L."/>
            <person name="Lam W."/>
            <person name="Marra M."/>
            <person name="Mesner L.D."/>
            <person name="Mieczkowski P.A."/>
            <person name="Moyrand F."/>
            <person name="Nielsen K."/>
            <person name="Proux C."/>
            <person name="Rossignol T."/>
            <person name="Schein J.E."/>
            <person name="Sun S."/>
            <person name="Wollschlaeger C."/>
            <person name="Wood I.A."/>
            <person name="Zeng Q."/>
            <person name="Neuveglise C."/>
            <person name="Newlon C.S."/>
            <person name="Perfect J.R."/>
            <person name="Lodge J.K."/>
            <person name="Idnurm A."/>
            <person name="Stajich J.E."/>
            <person name="Kronstad J.W."/>
            <person name="Sanyal K."/>
            <person name="Heitman J."/>
            <person name="Fraser J.A."/>
            <person name="Cuomo C.A."/>
            <person name="Dietrich F.S."/>
        </authorList>
    </citation>
    <scope>NUCLEOTIDE SEQUENCE [LARGE SCALE GENOMIC DNA]</scope>
    <source>
        <strain evidence="8">H99 / ATCC 208821 / CBS 10515 / FGSC 9487</strain>
    </source>
</reference>
<reference evidence="6" key="2">
    <citation type="journal article" date="2020" name="Cell">
        <title>Evolutionary Persistence of DNA Methylation for Millions of Years after Ancient Loss of a De Novo Methyltransferase.</title>
        <authorList>
            <person name="Catania S."/>
            <person name="Dumesic P.A."/>
            <person name="Pimentel H."/>
            <person name="Nasif A."/>
            <person name="Stoddard C.I."/>
            <person name="Burke J.E."/>
            <person name="Diedrich J.K."/>
            <person name="Cook S."/>
            <person name="Shea T."/>
            <person name="Geinger E."/>
            <person name="Lintner R."/>
            <person name="Yates J.R. III"/>
            <person name="Hajkova P."/>
            <person name="Narlikar G.J."/>
            <person name="Cuomo C.A."/>
            <person name="Pritchard J.K."/>
            <person name="Madhani H.D."/>
        </authorList>
    </citation>
    <scope>FUNCTION</scope>
    <scope>DISRUPTION PHENOTYPE</scope>
</reference>
<accession>J9VHE9</accession>
<protein>
    <recommendedName>
        <fullName evidence="5">UHRF1-like protein</fullName>
    </recommendedName>
</protein>